<dbReference type="EC" id="3.1.13.-" evidence="1"/>
<dbReference type="EMBL" id="CP000447">
    <property type="protein sequence ID" value="ABI71308.1"/>
    <property type="molecule type" value="Genomic_DNA"/>
</dbReference>
<dbReference type="RefSeq" id="WP_011636929.1">
    <property type="nucleotide sequence ID" value="NC_008345.1"/>
</dbReference>
<dbReference type="SMR" id="Q084K7"/>
<dbReference type="STRING" id="318167.Sfri_1456"/>
<dbReference type="KEGG" id="sfr:Sfri_1456"/>
<dbReference type="eggNOG" id="COG0847">
    <property type="taxonomic scope" value="Bacteria"/>
</dbReference>
<dbReference type="HOGENOM" id="CLU_082724_0_0_6"/>
<dbReference type="OrthoDB" id="9778264at2"/>
<dbReference type="Proteomes" id="UP000000684">
    <property type="component" value="Chromosome"/>
</dbReference>
<dbReference type="GO" id="GO:0005829">
    <property type="term" value="C:cytosol"/>
    <property type="evidence" value="ECO:0007669"/>
    <property type="project" value="TreeGrafter"/>
</dbReference>
<dbReference type="GO" id="GO:0008408">
    <property type="term" value="F:3'-5' exonuclease activity"/>
    <property type="evidence" value="ECO:0007669"/>
    <property type="project" value="TreeGrafter"/>
</dbReference>
<dbReference type="GO" id="GO:0000287">
    <property type="term" value="F:magnesium ion binding"/>
    <property type="evidence" value="ECO:0007669"/>
    <property type="project" value="UniProtKB-UniRule"/>
</dbReference>
<dbReference type="GO" id="GO:0003676">
    <property type="term" value="F:nucleic acid binding"/>
    <property type="evidence" value="ECO:0007669"/>
    <property type="project" value="InterPro"/>
</dbReference>
<dbReference type="GO" id="GO:0016896">
    <property type="term" value="F:RNA exonuclease activity, producing 5'-phosphomonoesters"/>
    <property type="evidence" value="ECO:0007669"/>
    <property type="project" value="UniProtKB-UniRule"/>
</dbReference>
<dbReference type="GO" id="GO:0045004">
    <property type="term" value="P:DNA replication proofreading"/>
    <property type="evidence" value="ECO:0007669"/>
    <property type="project" value="TreeGrafter"/>
</dbReference>
<dbReference type="GO" id="GO:0008033">
    <property type="term" value="P:tRNA processing"/>
    <property type="evidence" value="ECO:0007669"/>
    <property type="project" value="UniProtKB-KW"/>
</dbReference>
<dbReference type="CDD" id="cd06134">
    <property type="entry name" value="RNaseT"/>
    <property type="match status" value="1"/>
</dbReference>
<dbReference type="FunFam" id="3.30.420.10:FF:000009">
    <property type="entry name" value="Ribonuclease T"/>
    <property type="match status" value="1"/>
</dbReference>
<dbReference type="Gene3D" id="3.30.420.10">
    <property type="entry name" value="Ribonuclease H-like superfamily/Ribonuclease H"/>
    <property type="match status" value="1"/>
</dbReference>
<dbReference type="HAMAP" id="MF_00157">
    <property type="entry name" value="RNase_T"/>
    <property type="match status" value="1"/>
</dbReference>
<dbReference type="InterPro" id="IPR013520">
    <property type="entry name" value="Exonuclease_RNaseT/DNA_pol3"/>
</dbReference>
<dbReference type="InterPro" id="IPR005987">
    <property type="entry name" value="RNase_T"/>
</dbReference>
<dbReference type="InterPro" id="IPR012337">
    <property type="entry name" value="RNaseH-like_sf"/>
</dbReference>
<dbReference type="InterPro" id="IPR036397">
    <property type="entry name" value="RNaseH_sf"/>
</dbReference>
<dbReference type="NCBIfam" id="TIGR01298">
    <property type="entry name" value="RNaseT"/>
    <property type="match status" value="1"/>
</dbReference>
<dbReference type="PANTHER" id="PTHR30231">
    <property type="entry name" value="DNA POLYMERASE III SUBUNIT EPSILON"/>
    <property type="match status" value="1"/>
</dbReference>
<dbReference type="PANTHER" id="PTHR30231:SF2">
    <property type="entry name" value="RIBONUCLEASE T"/>
    <property type="match status" value="1"/>
</dbReference>
<dbReference type="Pfam" id="PF00929">
    <property type="entry name" value="RNase_T"/>
    <property type="match status" value="1"/>
</dbReference>
<dbReference type="SMART" id="SM00479">
    <property type="entry name" value="EXOIII"/>
    <property type="match status" value="1"/>
</dbReference>
<dbReference type="SUPFAM" id="SSF53098">
    <property type="entry name" value="Ribonuclease H-like"/>
    <property type="match status" value="1"/>
</dbReference>
<accession>Q084K7</accession>
<gene>
    <name evidence="1" type="primary">rnt</name>
    <name type="ordered locus">Sfri_1456</name>
</gene>
<organism>
    <name type="scientific">Shewanella frigidimarina (strain NCIMB 400)</name>
    <dbReference type="NCBI Taxonomy" id="318167"/>
    <lineage>
        <taxon>Bacteria</taxon>
        <taxon>Pseudomonadati</taxon>
        <taxon>Pseudomonadota</taxon>
        <taxon>Gammaproteobacteria</taxon>
        <taxon>Alteromonadales</taxon>
        <taxon>Shewanellaceae</taxon>
        <taxon>Shewanella</taxon>
    </lineage>
</organism>
<reference key="1">
    <citation type="submission" date="2006-08" db="EMBL/GenBank/DDBJ databases">
        <title>Complete sequence of Shewanella frigidimarina NCIMB 400.</title>
        <authorList>
            <consortium name="US DOE Joint Genome Institute"/>
            <person name="Copeland A."/>
            <person name="Lucas S."/>
            <person name="Lapidus A."/>
            <person name="Barry K."/>
            <person name="Detter J.C."/>
            <person name="Glavina del Rio T."/>
            <person name="Hammon N."/>
            <person name="Israni S."/>
            <person name="Dalin E."/>
            <person name="Tice H."/>
            <person name="Pitluck S."/>
            <person name="Fredrickson J.K."/>
            <person name="Kolker E."/>
            <person name="McCuel L.A."/>
            <person name="DiChristina T."/>
            <person name="Nealson K.H."/>
            <person name="Newman D."/>
            <person name="Tiedje J.M."/>
            <person name="Zhou J."/>
            <person name="Romine M.F."/>
            <person name="Culley D.E."/>
            <person name="Serres M."/>
            <person name="Chertkov O."/>
            <person name="Brettin T."/>
            <person name="Bruce D."/>
            <person name="Han C."/>
            <person name="Tapia R."/>
            <person name="Gilna P."/>
            <person name="Schmutz J."/>
            <person name="Larimer F."/>
            <person name="Land M."/>
            <person name="Hauser L."/>
            <person name="Kyrpides N."/>
            <person name="Mikhailova N."/>
            <person name="Richardson P."/>
        </authorList>
    </citation>
    <scope>NUCLEOTIDE SEQUENCE [LARGE SCALE GENOMIC DNA]</scope>
    <source>
        <strain>NCIMB 400</strain>
    </source>
</reference>
<proteinExistence type="inferred from homology"/>
<comment type="function">
    <text evidence="1">Trims short 3' overhangs of a variety of RNA species, leaving a one or two nucleotide 3' overhang. Responsible for the end-turnover of tRNA: specifically removes the terminal AMP residue from uncharged tRNA (tRNA-C-C-A). Also appears to be involved in tRNA biosynthesis.</text>
</comment>
<comment type="cofactor">
    <cofactor evidence="1">
        <name>Mg(2+)</name>
        <dbReference type="ChEBI" id="CHEBI:18420"/>
    </cofactor>
    <text evidence="1">Binds two Mg(2+) per subunit. The active form of the enzyme binds two Mg(2+) ions in its active site. The first Mg(2+) forms only one salt bridge with the protein.</text>
</comment>
<comment type="subunit">
    <text evidence="1">Homodimer.</text>
</comment>
<comment type="similarity">
    <text evidence="1">Belongs to the RNase T family.</text>
</comment>
<evidence type="ECO:0000255" key="1">
    <source>
        <dbReference type="HAMAP-Rule" id="MF_00157"/>
    </source>
</evidence>
<name>RNT_SHEFN</name>
<feature type="chain" id="PRO_1000011415" description="Ribonuclease T">
    <location>
        <begin position="1"/>
        <end position="221"/>
    </location>
</feature>
<feature type="domain" description="Exonuclease" evidence="1">
    <location>
        <begin position="20"/>
        <end position="194"/>
    </location>
</feature>
<feature type="active site" description="Proton donor/acceptor" evidence="1">
    <location>
        <position position="181"/>
    </location>
</feature>
<feature type="binding site" evidence="1">
    <location>
        <position position="23"/>
    </location>
    <ligand>
        <name>Mg(2+)</name>
        <dbReference type="ChEBI" id="CHEBI:18420"/>
        <label>1</label>
        <note>catalytic</note>
    </ligand>
</feature>
<feature type="binding site" evidence="1">
    <location>
        <position position="23"/>
    </location>
    <ligand>
        <name>Mg(2+)</name>
        <dbReference type="ChEBI" id="CHEBI:18420"/>
        <label>2</label>
        <note>catalytic</note>
    </ligand>
</feature>
<feature type="binding site" evidence="1">
    <location>
        <position position="25"/>
    </location>
    <ligand>
        <name>Mg(2+)</name>
        <dbReference type="ChEBI" id="CHEBI:18420"/>
        <label>2</label>
        <note>catalytic</note>
    </ligand>
</feature>
<feature type="binding site" evidence="1">
    <location>
        <position position="181"/>
    </location>
    <ligand>
        <name>Mg(2+)</name>
        <dbReference type="ChEBI" id="CHEBI:18420"/>
        <label>2</label>
        <note>catalytic</note>
    </ligand>
</feature>
<feature type="binding site" evidence="1">
    <location>
        <position position="186"/>
    </location>
    <ligand>
        <name>Mg(2+)</name>
        <dbReference type="ChEBI" id="CHEBI:18420"/>
        <label>2</label>
        <note>catalytic</note>
    </ligand>
</feature>
<feature type="site" description="Important for substrate binding and specificity" evidence="1">
    <location>
        <position position="29"/>
    </location>
</feature>
<feature type="site" description="Important for substrate binding and specificity" evidence="1">
    <location>
        <position position="77"/>
    </location>
</feature>
<feature type="site" description="Important for substrate binding and specificity" evidence="1">
    <location>
        <position position="124"/>
    </location>
</feature>
<feature type="site" description="Important for substrate binding and specificity" evidence="1">
    <location>
        <position position="146"/>
    </location>
</feature>
<protein>
    <recommendedName>
        <fullName evidence="1">Ribonuclease T</fullName>
        <ecNumber evidence="1">3.1.13.-</ecNumber>
    </recommendedName>
    <alternativeName>
        <fullName evidence="1">Exoribonuclease T</fullName>
        <shortName evidence="1">RNase T</shortName>
    </alternativeName>
</protein>
<sequence>MTDICDANKFKHRFRGYFPVVIDVETAGFNANTDALLEIAVSLLKMNSDGVIVLDRTLHFNIEPFEGANLEPAALAFNGIDPTNPLRGAVDEKVAFLEIFKEVKKAQKAADCHRSIIVAHNAAFDLGFVNKAIERNGLKRSPFHPFASFDTATLAGLAIGHTVLAKACKMAGIDFDNKEAHSALYDTERTAELFCLIVNRWKALGGWPLAAVEDDSDSTSE</sequence>
<keyword id="KW-0269">Exonuclease</keyword>
<keyword id="KW-0378">Hydrolase</keyword>
<keyword id="KW-0460">Magnesium</keyword>
<keyword id="KW-0479">Metal-binding</keyword>
<keyword id="KW-0540">Nuclease</keyword>
<keyword id="KW-1185">Reference proteome</keyword>
<keyword id="KW-0819">tRNA processing</keyword>